<proteinExistence type="evidence at protein level"/>
<keyword id="KW-0007">Acetylation</keyword>
<keyword id="KW-0269">Exonuclease</keyword>
<keyword id="KW-0378">Hydrolase</keyword>
<keyword id="KW-0540">Nuclease</keyword>
<keyword id="KW-1185">Reference proteome</keyword>
<keyword id="KW-0694">RNA-binding</keyword>
<name>TRIR_MOUSE</name>
<feature type="chain" id="PRO_0000280763" description="Telomerase RNA component interacting RNase">
    <location>
        <begin position="1"/>
        <end position="173"/>
    </location>
</feature>
<feature type="region of interest" description="Disordered" evidence="2">
    <location>
        <begin position="1"/>
        <end position="119"/>
    </location>
</feature>
<feature type="compositionally biased region" description="Basic and acidic residues" evidence="2">
    <location>
        <begin position="1"/>
        <end position="12"/>
    </location>
</feature>
<feature type="compositionally biased region" description="Low complexity" evidence="2">
    <location>
        <begin position="14"/>
        <end position="23"/>
    </location>
</feature>
<feature type="compositionally biased region" description="Low complexity" evidence="2">
    <location>
        <begin position="43"/>
        <end position="52"/>
    </location>
</feature>
<feature type="compositionally biased region" description="Basic and acidic residues" evidence="2">
    <location>
        <begin position="64"/>
        <end position="79"/>
    </location>
</feature>
<feature type="compositionally biased region" description="Pro residues" evidence="2">
    <location>
        <begin position="80"/>
        <end position="90"/>
    </location>
</feature>
<feature type="modified residue" description="N6-acetyllysine" evidence="5">
    <location>
        <position position="143"/>
    </location>
</feature>
<feature type="sequence conflict" description="In Ref. 1; BAB22700." evidence="3" ref="1">
    <original>AGSGRSR</original>
    <variation>RGAAAGAE</variation>
    <location>
        <begin position="19"/>
        <end position="25"/>
    </location>
</feature>
<accession>Q9D735</accession>
<accession>Q9D1N3</accession>
<organism>
    <name type="scientific">Mus musculus</name>
    <name type="common">Mouse</name>
    <dbReference type="NCBI Taxonomy" id="10090"/>
    <lineage>
        <taxon>Eukaryota</taxon>
        <taxon>Metazoa</taxon>
        <taxon>Chordata</taxon>
        <taxon>Craniata</taxon>
        <taxon>Vertebrata</taxon>
        <taxon>Euteleostomi</taxon>
        <taxon>Mammalia</taxon>
        <taxon>Eutheria</taxon>
        <taxon>Euarchontoglires</taxon>
        <taxon>Glires</taxon>
        <taxon>Rodentia</taxon>
        <taxon>Myomorpha</taxon>
        <taxon>Muroidea</taxon>
        <taxon>Muridae</taxon>
        <taxon>Murinae</taxon>
        <taxon>Mus</taxon>
        <taxon>Mus</taxon>
    </lineage>
</organism>
<comment type="function">
    <text evidence="1">Exoribonuclease that is part of the telomerase RNA 3' end processing complex and which has the ability to cleave all four unpaired RNA nucleotides from the 5' end or 3' end with higher efficiency for purine bases (By similarity).</text>
</comment>
<comment type="subunit">
    <text evidence="1">Part of the telomerase RNA 3' end complex which contains about 488 proteins (By similarity).</text>
</comment>
<comment type="domain">
    <text evidence="1">The C-terminus contains a key domain which is responsible for the RNA digestion activity (By similarity).</text>
</comment>
<evidence type="ECO:0000250" key="1">
    <source>
        <dbReference type="UniProtKB" id="Q9BQ61"/>
    </source>
</evidence>
<evidence type="ECO:0000256" key="2">
    <source>
        <dbReference type="SAM" id="MobiDB-lite"/>
    </source>
</evidence>
<evidence type="ECO:0000305" key="3"/>
<evidence type="ECO:0000312" key="4">
    <source>
        <dbReference type="MGI" id="MGI:1922833"/>
    </source>
</evidence>
<evidence type="ECO:0007744" key="5">
    <source>
    </source>
</evidence>
<dbReference type="EC" id="3.1.13.-" evidence="1"/>
<dbReference type="EMBL" id="AK003299">
    <property type="protein sequence ID" value="BAB22700.1"/>
    <property type="molecule type" value="mRNA"/>
</dbReference>
<dbReference type="EMBL" id="AK009653">
    <property type="protein sequence ID" value="BAB26417.1"/>
    <property type="molecule type" value="mRNA"/>
</dbReference>
<dbReference type="EMBL" id="BC023284">
    <property type="protein sequence ID" value="AAH23284.1"/>
    <property type="molecule type" value="mRNA"/>
</dbReference>
<dbReference type="EMBL" id="BC029622">
    <property type="protein sequence ID" value="AAH29622.1"/>
    <property type="molecule type" value="mRNA"/>
</dbReference>
<dbReference type="CCDS" id="CCDS22490.1"/>
<dbReference type="RefSeq" id="NP_081036.2">
    <property type="nucleotide sequence ID" value="NM_026760.3"/>
</dbReference>
<dbReference type="SMR" id="Q9D735"/>
<dbReference type="BioGRID" id="212918">
    <property type="interactions" value="18"/>
</dbReference>
<dbReference type="FunCoup" id="Q9D735">
    <property type="interactions" value="137"/>
</dbReference>
<dbReference type="IntAct" id="Q9D735">
    <property type="interactions" value="1"/>
</dbReference>
<dbReference type="MINT" id="Q9D735"/>
<dbReference type="STRING" id="10090.ENSMUSP00000044129"/>
<dbReference type="GlyGen" id="Q9D735">
    <property type="glycosylation" value="2 sites, 1 O-linked glycan (1 site)"/>
</dbReference>
<dbReference type="iPTMnet" id="Q9D735"/>
<dbReference type="PhosphoSitePlus" id="Q9D735"/>
<dbReference type="SwissPalm" id="Q9D735"/>
<dbReference type="jPOST" id="Q9D735"/>
<dbReference type="PaxDb" id="10090-ENSMUSP00000044129"/>
<dbReference type="PeptideAtlas" id="Q9D735"/>
<dbReference type="ProteomicsDB" id="259102"/>
<dbReference type="Pumba" id="Q9D735"/>
<dbReference type="Antibodypedia" id="26146">
    <property type="antibodies" value="32 antibodies from 15 providers"/>
</dbReference>
<dbReference type="DNASU" id="68544"/>
<dbReference type="Ensembl" id="ENSMUST00000047281.10">
    <property type="protein sequence ID" value="ENSMUSP00000044129.9"/>
    <property type="gene ID" value="ENSMUSG00000041203.10"/>
</dbReference>
<dbReference type="GeneID" id="68544"/>
<dbReference type="KEGG" id="mmu:68544"/>
<dbReference type="UCSC" id="uc009moy.1">
    <property type="organism name" value="mouse"/>
</dbReference>
<dbReference type="AGR" id="MGI:1922833"/>
<dbReference type="CTD" id="79002"/>
<dbReference type="MGI" id="MGI:1922833">
    <property type="gene designation" value="Trir"/>
</dbReference>
<dbReference type="VEuPathDB" id="HostDB:ENSMUSG00000041203"/>
<dbReference type="eggNOG" id="ENOG502S83W">
    <property type="taxonomic scope" value="Eukaryota"/>
</dbReference>
<dbReference type="GeneTree" id="ENSGT00390000012267"/>
<dbReference type="HOGENOM" id="CLU_126877_0_0_1"/>
<dbReference type="InParanoid" id="Q9D735"/>
<dbReference type="OMA" id="TNKGDAW"/>
<dbReference type="OrthoDB" id="5983145at2759"/>
<dbReference type="PhylomeDB" id="Q9D735"/>
<dbReference type="TreeFam" id="TF323808"/>
<dbReference type="BioGRID-ORCS" id="68544">
    <property type="hits" value="22 hits in 78 CRISPR screens"/>
</dbReference>
<dbReference type="PRO" id="PR:Q9D735"/>
<dbReference type="Proteomes" id="UP000000589">
    <property type="component" value="Chromosome 8"/>
</dbReference>
<dbReference type="RNAct" id="Q9D735">
    <property type="molecule type" value="protein"/>
</dbReference>
<dbReference type="Bgee" id="ENSMUSG00000041203">
    <property type="expression patterns" value="Expressed in dorsal pancreas and 269 other cell types or tissues"/>
</dbReference>
<dbReference type="GO" id="GO:0008408">
    <property type="term" value="F:3'-5' exonuclease activity"/>
    <property type="evidence" value="ECO:0000250"/>
    <property type="project" value="UniProtKB"/>
</dbReference>
<dbReference type="GO" id="GO:0008409">
    <property type="term" value="F:5'-3' exonuclease activity"/>
    <property type="evidence" value="ECO:0000250"/>
    <property type="project" value="UniProtKB"/>
</dbReference>
<dbReference type="GO" id="GO:0003723">
    <property type="term" value="F:RNA binding"/>
    <property type="evidence" value="ECO:0007669"/>
    <property type="project" value="UniProtKB-KW"/>
</dbReference>
<dbReference type="GO" id="GO:0016075">
    <property type="term" value="P:rRNA catabolic process"/>
    <property type="evidence" value="ECO:0000250"/>
    <property type="project" value="UniProtKB"/>
</dbReference>
<dbReference type="InterPro" id="IPR038838">
    <property type="entry name" value="TRIR"/>
</dbReference>
<dbReference type="PANTHER" id="PTHR34753">
    <property type="entry name" value="TELOMERASE RNA COMPONENT INTERACTING RNASE"/>
    <property type="match status" value="1"/>
</dbReference>
<dbReference type="PANTHER" id="PTHR34753:SF1">
    <property type="entry name" value="TELOMERASE RNA COMPONENT INTERACTING RNASE"/>
    <property type="match status" value="1"/>
</dbReference>
<reference key="1">
    <citation type="journal article" date="2005" name="Science">
        <title>The transcriptional landscape of the mammalian genome.</title>
        <authorList>
            <person name="Carninci P."/>
            <person name="Kasukawa T."/>
            <person name="Katayama S."/>
            <person name="Gough J."/>
            <person name="Frith M.C."/>
            <person name="Maeda N."/>
            <person name="Oyama R."/>
            <person name="Ravasi T."/>
            <person name="Lenhard B."/>
            <person name="Wells C."/>
            <person name="Kodzius R."/>
            <person name="Shimokawa K."/>
            <person name="Bajic V.B."/>
            <person name="Brenner S.E."/>
            <person name="Batalov S."/>
            <person name="Forrest A.R."/>
            <person name="Zavolan M."/>
            <person name="Davis M.J."/>
            <person name="Wilming L.G."/>
            <person name="Aidinis V."/>
            <person name="Allen J.E."/>
            <person name="Ambesi-Impiombato A."/>
            <person name="Apweiler R."/>
            <person name="Aturaliya R.N."/>
            <person name="Bailey T.L."/>
            <person name="Bansal M."/>
            <person name="Baxter L."/>
            <person name="Beisel K.W."/>
            <person name="Bersano T."/>
            <person name="Bono H."/>
            <person name="Chalk A.M."/>
            <person name="Chiu K.P."/>
            <person name="Choudhary V."/>
            <person name="Christoffels A."/>
            <person name="Clutterbuck D.R."/>
            <person name="Crowe M.L."/>
            <person name="Dalla E."/>
            <person name="Dalrymple B.P."/>
            <person name="de Bono B."/>
            <person name="Della Gatta G."/>
            <person name="di Bernardo D."/>
            <person name="Down T."/>
            <person name="Engstrom P."/>
            <person name="Fagiolini M."/>
            <person name="Faulkner G."/>
            <person name="Fletcher C.F."/>
            <person name="Fukushima T."/>
            <person name="Furuno M."/>
            <person name="Futaki S."/>
            <person name="Gariboldi M."/>
            <person name="Georgii-Hemming P."/>
            <person name="Gingeras T.R."/>
            <person name="Gojobori T."/>
            <person name="Green R.E."/>
            <person name="Gustincich S."/>
            <person name="Harbers M."/>
            <person name="Hayashi Y."/>
            <person name="Hensch T.K."/>
            <person name="Hirokawa N."/>
            <person name="Hill D."/>
            <person name="Huminiecki L."/>
            <person name="Iacono M."/>
            <person name="Ikeo K."/>
            <person name="Iwama A."/>
            <person name="Ishikawa T."/>
            <person name="Jakt M."/>
            <person name="Kanapin A."/>
            <person name="Katoh M."/>
            <person name="Kawasawa Y."/>
            <person name="Kelso J."/>
            <person name="Kitamura H."/>
            <person name="Kitano H."/>
            <person name="Kollias G."/>
            <person name="Krishnan S.P."/>
            <person name="Kruger A."/>
            <person name="Kummerfeld S.K."/>
            <person name="Kurochkin I.V."/>
            <person name="Lareau L.F."/>
            <person name="Lazarevic D."/>
            <person name="Lipovich L."/>
            <person name="Liu J."/>
            <person name="Liuni S."/>
            <person name="McWilliam S."/>
            <person name="Madan Babu M."/>
            <person name="Madera M."/>
            <person name="Marchionni L."/>
            <person name="Matsuda H."/>
            <person name="Matsuzawa S."/>
            <person name="Miki H."/>
            <person name="Mignone F."/>
            <person name="Miyake S."/>
            <person name="Morris K."/>
            <person name="Mottagui-Tabar S."/>
            <person name="Mulder N."/>
            <person name="Nakano N."/>
            <person name="Nakauchi H."/>
            <person name="Ng P."/>
            <person name="Nilsson R."/>
            <person name="Nishiguchi S."/>
            <person name="Nishikawa S."/>
            <person name="Nori F."/>
            <person name="Ohara O."/>
            <person name="Okazaki Y."/>
            <person name="Orlando V."/>
            <person name="Pang K.C."/>
            <person name="Pavan W.J."/>
            <person name="Pavesi G."/>
            <person name="Pesole G."/>
            <person name="Petrovsky N."/>
            <person name="Piazza S."/>
            <person name="Reed J."/>
            <person name="Reid J.F."/>
            <person name="Ring B.Z."/>
            <person name="Ringwald M."/>
            <person name="Rost B."/>
            <person name="Ruan Y."/>
            <person name="Salzberg S.L."/>
            <person name="Sandelin A."/>
            <person name="Schneider C."/>
            <person name="Schoenbach C."/>
            <person name="Sekiguchi K."/>
            <person name="Semple C.A."/>
            <person name="Seno S."/>
            <person name="Sessa L."/>
            <person name="Sheng Y."/>
            <person name="Shibata Y."/>
            <person name="Shimada H."/>
            <person name="Shimada K."/>
            <person name="Silva D."/>
            <person name="Sinclair B."/>
            <person name="Sperling S."/>
            <person name="Stupka E."/>
            <person name="Sugiura K."/>
            <person name="Sultana R."/>
            <person name="Takenaka Y."/>
            <person name="Taki K."/>
            <person name="Tammoja K."/>
            <person name="Tan S.L."/>
            <person name="Tang S."/>
            <person name="Taylor M.S."/>
            <person name="Tegner J."/>
            <person name="Teichmann S.A."/>
            <person name="Ueda H.R."/>
            <person name="van Nimwegen E."/>
            <person name="Verardo R."/>
            <person name="Wei C.L."/>
            <person name="Yagi K."/>
            <person name="Yamanishi H."/>
            <person name="Zabarovsky E."/>
            <person name="Zhu S."/>
            <person name="Zimmer A."/>
            <person name="Hide W."/>
            <person name="Bult C."/>
            <person name="Grimmond S.M."/>
            <person name="Teasdale R.D."/>
            <person name="Liu E.T."/>
            <person name="Brusic V."/>
            <person name="Quackenbush J."/>
            <person name="Wahlestedt C."/>
            <person name="Mattick J.S."/>
            <person name="Hume D.A."/>
            <person name="Kai C."/>
            <person name="Sasaki D."/>
            <person name="Tomaru Y."/>
            <person name="Fukuda S."/>
            <person name="Kanamori-Katayama M."/>
            <person name="Suzuki M."/>
            <person name="Aoki J."/>
            <person name="Arakawa T."/>
            <person name="Iida J."/>
            <person name="Imamura K."/>
            <person name="Itoh M."/>
            <person name="Kato T."/>
            <person name="Kawaji H."/>
            <person name="Kawagashira N."/>
            <person name="Kawashima T."/>
            <person name="Kojima M."/>
            <person name="Kondo S."/>
            <person name="Konno H."/>
            <person name="Nakano K."/>
            <person name="Ninomiya N."/>
            <person name="Nishio T."/>
            <person name="Okada M."/>
            <person name="Plessy C."/>
            <person name="Shibata K."/>
            <person name="Shiraki T."/>
            <person name="Suzuki S."/>
            <person name="Tagami M."/>
            <person name="Waki K."/>
            <person name="Watahiki A."/>
            <person name="Okamura-Oho Y."/>
            <person name="Suzuki H."/>
            <person name="Kawai J."/>
            <person name="Hayashizaki Y."/>
        </authorList>
    </citation>
    <scope>NUCLEOTIDE SEQUENCE [LARGE SCALE MRNA]</scope>
    <source>
        <strain>C57BL/6J</strain>
        <tissue>Embryo</tissue>
        <tissue>Tongue</tissue>
    </source>
</reference>
<reference key="2">
    <citation type="journal article" date="2004" name="Genome Res.">
        <title>The status, quality, and expansion of the NIH full-length cDNA project: the Mammalian Gene Collection (MGC).</title>
        <authorList>
            <consortium name="The MGC Project Team"/>
        </authorList>
    </citation>
    <scope>NUCLEOTIDE SEQUENCE [LARGE SCALE MRNA]</scope>
    <source>
        <strain>FVB/N</strain>
        <tissue>Colon</tissue>
        <tissue>Mammary tumor</tissue>
    </source>
</reference>
<reference key="3">
    <citation type="journal article" date="2010" name="Cell">
        <title>A tissue-specific atlas of mouse protein phosphorylation and expression.</title>
        <authorList>
            <person name="Huttlin E.L."/>
            <person name="Jedrychowski M.P."/>
            <person name="Elias J.E."/>
            <person name="Goswami T."/>
            <person name="Rad R."/>
            <person name="Beausoleil S.A."/>
            <person name="Villen J."/>
            <person name="Haas W."/>
            <person name="Sowa M.E."/>
            <person name="Gygi S.P."/>
        </authorList>
    </citation>
    <scope>IDENTIFICATION BY MASS SPECTROMETRY [LARGE SCALE ANALYSIS]</scope>
    <source>
        <tissue>Brain</tissue>
        <tissue>Lung</tissue>
        <tissue>Spleen</tissue>
        <tissue>Testis</tissue>
    </source>
</reference>
<reference key="4">
    <citation type="journal article" date="2013" name="Mol. Cell">
        <title>SIRT5-mediated lysine desuccinylation impacts diverse metabolic pathways.</title>
        <authorList>
            <person name="Park J."/>
            <person name="Chen Y."/>
            <person name="Tishkoff D.X."/>
            <person name="Peng C."/>
            <person name="Tan M."/>
            <person name="Dai L."/>
            <person name="Xie Z."/>
            <person name="Zhang Y."/>
            <person name="Zwaans B.M."/>
            <person name="Skinner M.E."/>
            <person name="Lombard D.B."/>
            <person name="Zhao Y."/>
        </authorList>
    </citation>
    <scope>ACETYLATION [LARGE SCALE ANALYSIS] AT LYS-143</scope>
    <scope>IDENTIFICATION BY MASS SPECTROMETRY [LARGE SCALE ANALYSIS]</scope>
    <source>
        <tissue>Embryonic fibroblast</tissue>
    </source>
</reference>
<sequence length="173" mass="18377">MAARGRRAEPPGREAPGPAGSGRSRWAESGPGTSPESGDDEVSGSSPVSSGVNLFANDGSFLELFKRKMEEEQRQRQEEPPPGPQRPDPPASAAAGPGNPKRKGGPGPTLSFVGKRRGGNKLALKTGIVAKKQKTEDEVLTSKGDAWAKYMAEVKKYKAHQCGDDDKTRPLVK</sequence>
<gene>
    <name evidence="4" type="primary">Trir</name>
</gene>
<protein>
    <recommendedName>
        <fullName evidence="4">Telomerase RNA component interacting RNase</fullName>
        <ecNumber evidence="1">3.1.13.-</ecNumber>
    </recommendedName>
    <alternativeName>
        <fullName evidence="3">Exoribonuclease Trir</fullName>
    </alternativeName>
</protein>